<feature type="chain" id="PRO_0000155260" description="Thymidylate kinase">
    <location>
        <begin position="1"/>
        <end position="203"/>
    </location>
</feature>
<feature type="binding site" evidence="2">
    <location>
        <begin position="7"/>
        <end position="14"/>
    </location>
    <ligand>
        <name>ATP</name>
        <dbReference type="ChEBI" id="CHEBI:30616"/>
    </ligand>
</feature>
<dbReference type="EC" id="2.7.4.9"/>
<dbReference type="EMBL" id="AE002160">
    <property type="protein sequence ID" value="AAF39311.1"/>
    <property type="molecule type" value="Genomic_DNA"/>
</dbReference>
<dbReference type="PIR" id="G81700">
    <property type="entry name" value="G81700"/>
</dbReference>
<dbReference type="RefSeq" id="WP_010230503.1">
    <property type="nucleotide sequence ID" value="NZ_CP063055.1"/>
</dbReference>
<dbReference type="SMR" id="Q9PKK5"/>
<dbReference type="GeneID" id="1245815"/>
<dbReference type="KEGG" id="cmu:TC_0460"/>
<dbReference type="eggNOG" id="COG0125">
    <property type="taxonomic scope" value="Bacteria"/>
</dbReference>
<dbReference type="HOGENOM" id="CLU_049131_0_0_0"/>
<dbReference type="OrthoDB" id="9774907at2"/>
<dbReference type="Proteomes" id="UP000000800">
    <property type="component" value="Chromosome"/>
</dbReference>
<dbReference type="GO" id="GO:0005829">
    <property type="term" value="C:cytosol"/>
    <property type="evidence" value="ECO:0007669"/>
    <property type="project" value="TreeGrafter"/>
</dbReference>
<dbReference type="GO" id="GO:0005524">
    <property type="term" value="F:ATP binding"/>
    <property type="evidence" value="ECO:0007669"/>
    <property type="project" value="UniProtKB-UniRule"/>
</dbReference>
<dbReference type="GO" id="GO:0004798">
    <property type="term" value="F:dTMP kinase activity"/>
    <property type="evidence" value="ECO:0007669"/>
    <property type="project" value="UniProtKB-UniRule"/>
</dbReference>
<dbReference type="GO" id="GO:0006233">
    <property type="term" value="P:dTDP biosynthetic process"/>
    <property type="evidence" value="ECO:0007669"/>
    <property type="project" value="InterPro"/>
</dbReference>
<dbReference type="GO" id="GO:0006235">
    <property type="term" value="P:dTTP biosynthetic process"/>
    <property type="evidence" value="ECO:0007669"/>
    <property type="project" value="UniProtKB-UniRule"/>
</dbReference>
<dbReference type="GO" id="GO:0006227">
    <property type="term" value="P:dUDP biosynthetic process"/>
    <property type="evidence" value="ECO:0007669"/>
    <property type="project" value="TreeGrafter"/>
</dbReference>
<dbReference type="CDD" id="cd01672">
    <property type="entry name" value="TMPK"/>
    <property type="match status" value="1"/>
</dbReference>
<dbReference type="FunFam" id="3.40.50.300:FF:000225">
    <property type="entry name" value="Thymidylate kinase"/>
    <property type="match status" value="1"/>
</dbReference>
<dbReference type="Gene3D" id="3.40.50.300">
    <property type="entry name" value="P-loop containing nucleotide triphosphate hydrolases"/>
    <property type="match status" value="1"/>
</dbReference>
<dbReference type="HAMAP" id="MF_00165">
    <property type="entry name" value="Thymidylate_kinase"/>
    <property type="match status" value="1"/>
</dbReference>
<dbReference type="InterPro" id="IPR027417">
    <property type="entry name" value="P-loop_NTPase"/>
</dbReference>
<dbReference type="InterPro" id="IPR039430">
    <property type="entry name" value="Thymidylate_kin-like_dom"/>
</dbReference>
<dbReference type="InterPro" id="IPR018095">
    <property type="entry name" value="Thymidylate_kin_CS"/>
</dbReference>
<dbReference type="InterPro" id="IPR018094">
    <property type="entry name" value="Thymidylate_kinase"/>
</dbReference>
<dbReference type="NCBIfam" id="TIGR00041">
    <property type="entry name" value="DTMP_kinase"/>
    <property type="match status" value="1"/>
</dbReference>
<dbReference type="PANTHER" id="PTHR10344">
    <property type="entry name" value="THYMIDYLATE KINASE"/>
    <property type="match status" value="1"/>
</dbReference>
<dbReference type="PANTHER" id="PTHR10344:SF4">
    <property type="entry name" value="UMP-CMP KINASE 2, MITOCHONDRIAL"/>
    <property type="match status" value="1"/>
</dbReference>
<dbReference type="Pfam" id="PF02223">
    <property type="entry name" value="Thymidylate_kin"/>
    <property type="match status" value="1"/>
</dbReference>
<dbReference type="SUPFAM" id="SSF52540">
    <property type="entry name" value="P-loop containing nucleoside triphosphate hydrolases"/>
    <property type="match status" value="1"/>
</dbReference>
<dbReference type="PROSITE" id="PS01331">
    <property type="entry name" value="THYMIDYLATE_KINASE"/>
    <property type="match status" value="1"/>
</dbReference>
<reference key="1">
    <citation type="journal article" date="2000" name="Nucleic Acids Res.">
        <title>Genome sequences of Chlamydia trachomatis MoPn and Chlamydia pneumoniae AR39.</title>
        <authorList>
            <person name="Read T.D."/>
            <person name="Brunham R.C."/>
            <person name="Shen C."/>
            <person name="Gill S.R."/>
            <person name="Heidelberg J.F."/>
            <person name="White O."/>
            <person name="Hickey E.K."/>
            <person name="Peterson J.D."/>
            <person name="Utterback T.R."/>
            <person name="Berry K.J."/>
            <person name="Bass S."/>
            <person name="Linher K.D."/>
            <person name="Weidman J.F."/>
            <person name="Khouri H.M."/>
            <person name="Craven B."/>
            <person name="Bowman C."/>
            <person name="Dodson R.J."/>
            <person name="Gwinn M.L."/>
            <person name="Nelson W.C."/>
            <person name="DeBoy R.T."/>
            <person name="Kolonay J.F."/>
            <person name="McClarty G."/>
            <person name="Salzberg S.L."/>
            <person name="Eisen J.A."/>
            <person name="Fraser C.M."/>
        </authorList>
    </citation>
    <scope>NUCLEOTIDE SEQUENCE [LARGE SCALE GENOMIC DNA]</scope>
    <source>
        <strain>MoPn / Nigg</strain>
    </source>
</reference>
<accession>Q9PKK5</accession>
<gene>
    <name type="primary">tmk</name>
    <name type="ordered locus">TC_0460</name>
</gene>
<keyword id="KW-0067">ATP-binding</keyword>
<keyword id="KW-0418">Kinase</keyword>
<keyword id="KW-0545">Nucleotide biosynthesis</keyword>
<keyword id="KW-0547">Nucleotide-binding</keyword>
<keyword id="KW-0808">Transferase</keyword>
<name>KTHY_CHLMU</name>
<proteinExistence type="inferred from homology"/>
<protein>
    <recommendedName>
        <fullName>Thymidylate kinase</fullName>
        <ecNumber>2.7.4.9</ecNumber>
    </recommendedName>
    <alternativeName>
        <fullName>dTMP kinase</fullName>
    </alternativeName>
</protein>
<evidence type="ECO:0000250" key="1"/>
<evidence type="ECO:0000255" key="2"/>
<evidence type="ECO:0000305" key="3"/>
<sequence>MFIVVEGGEGAGKTQFTQALSKRLMEEGKEVVLTREPGGSALGEQLRDLVLDVTQEISSYAELLLFLAARAQHIQEKILPALESGKTVICDRFHDSTIVYQGIAGGLGEAFVTDLCYRVVGDEPFLPDITFLLDLPEKEGLLRKTRQKNLDRFEQKPTSFHRAAREGFISLAERSPDRYKILDALLPTEVSVDQALLQIRALI</sequence>
<organism>
    <name type="scientific">Chlamydia muridarum (strain MoPn / Nigg)</name>
    <dbReference type="NCBI Taxonomy" id="243161"/>
    <lineage>
        <taxon>Bacteria</taxon>
        <taxon>Pseudomonadati</taxon>
        <taxon>Chlamydiota</taxon>
        <taxon>Chlamydiia</taxon>
        <taxon>Chlamydiales</taxon>
        <taxon>Chlamydiaceae</taxon>
        <taxon>Chlamydia/Chlamydophila group</taxon>
        <taxon>Chlamydia</taxon>
    </lineage>
</organism>
<comment type="function">
    <text evidence="1">Phosphorylation of dTMP to form dTDP in both de novo and salvage pathways of dTTP synthesis.</text>
</comment>
<comment type="catalytic activity">
    <reaction>
        <text>dTMP + ATP = dTDP + ADP</text>
        <dbReference type="Rhea" id="RHEA:13517"/>
        <dbReference type="ChEBI" id="CHEBI:30616"/>
        <dbReference type="ChEBI" id="CHEBI:58369"/>
        <dbReference type="ChEBI" id="CHEBI:63528"/>
        <dbReference type="ChEBI" id="CHEBI:456216"/>
        <dbReference type="EC" id="2.7.4.9"/>
    </reaction>
</comment>
<comment type="similarity">
    <text evidence="3">Belongs to the thymidylate kinase family.</text>
</comment>